<evidence type="ECO:0000250" key="1"/>
<evidence type="ECO:0000269" key="2">
    <source>
    </source>
</evidence>
<evidence type="ECO:0000269" key="3">
    <source>
    </source>
</evidence>
<evidence type="ECO:0000269" key="4">
    <source>
    </source>
</evidence>
<evidence type="ECO:0000269" key="5">
    <source>
    </source>
</evidence>
<evidence type="ECO:0000269" key="6">
    <source>
    </source>
</evidence>
<evidence type="ECO:0000269" key="7">
    <source>
    </source>
</evidence>
<evidence type="ECO:0000269" key="8">
    <source>
    </source>
</evidence>
<evidence type="ECO:0000269" key="9">
    <source>
    </source>
</evidence>
<evidence type="ECO:0000269" key="10">
    <source>
    </source>
</evidence>
<evidence type="ECO:0000303" key="11">
    <source>
    </source>
</evidence>
<evidence type="ECO:0000303" key="12">
    <source>
    </source>
</evidence>
<evidence type="ECO:0000303" key="13">
    <source>
    </source>
</evidence>
<evidence type="ECO:0000305" key="14"/>
<evidence type="ECO:0000305" key="15">
    <source>
    </source>
</evidence>
<evidence type="ECO:0000305" key="16">
    <source>
    </source>
</evidence>
<gene>
    <name type="primary">SAT1</name>
    <name evidence="12" type="synonym">SAT5</name>
    <name type="ordered locus">At1g55920</name>
    <name type="ORF">F14J16.18</name>
</gene>
<reference key="1">
    <citation type="journal article" date="1995" name="Cell. Mol. Biol. Res.">
        <title>Serine acetyltransferase from Arabidopsis thaliana can functionally complement the cysteine requirement of a cysE mutant strain of Escherichia coli.</title>
        <authorList>
            <person name="Murillo M."/>
            <person name="Foglia R."/>
            <person name="Diller A."/>
            <person name="Lee S."/>
            <person name="Leustek T."/>
        </authorList>
    </citation>
    <scope>NUCLEOTIDE SEQUENCE [MRNA]</scope>
    <scope>TISSUE SPECIFICITY</scope>
    <source>
        <strain>cv. Columbia</strain>
    </source>
</reference>
<reference key="2">
    <citation type="journal article" date="1995" name="Eur. J. Biochem.">
        <title>Subcellular distribution of serine acetyltransferase from Pisum sativum and characterization of an Arabidopsis thaliana putative cytosolic isoform.</title>
        <authorList>
            <person name="Ruffet M.-L."/>
            <person name="Lebrun M."/>
            <person name="Droux M."/>
            <person name="Douce R."/>
        </authorList>
    </citation>
    <scope>NUCLEOTIDE SEQUENCE [GENOMIC DNA]</scope>
    <scope>CATALYTIC ACTIVITY</scope>
    <source>
        <strain>cv. Columbia</strain>
    </source>
</reference>
<reference key="3">
    <citation type="journal article" date="2000" name="Nature">
        <title>Sequence and analysis of chromosome 1 of the plant Arabidopsis thaliana.</title>
        <authorList>
            <person name="Theologis A."/>
            <person name="Ecker J.R."/>
            <person name="Palm C.J."/>
            <person name="Federspiel N.A."/>
            <person name="Kaul S."/>
            <person name="White O."/>
            <person name="Alonso J."/>
            <person name="Altafi H."/>
            <person name="Araujo R."/>
            <person name="Bowman C.L."/>
            <person name="Brooks S.Y."/>
            <person name="Buehler E."/>
            <person name="Chan A."/>
            <person name="Chao Q."/>
            <person name="Chen H."/>
            <person name="Cheuk R.F."/>
            <person name="Chin C.W."/>
            <person name="Chung M.K."/>
            <person name="Conn L."/>
            <person name="Conway A.B."/>
            <person name="Conway A.R."/>
            <person name="Creasy T.H."/>
            <person name="Dewar K."/>
            <person name="Dunn P."/>
            <person name="Etgu P."/>
            <person name="Feldblyum T.V."/>
            <person name="Feng J.-D."/>
            <person name="Fong B."/>
            <person name="Fujii C.Y."/>
            <person name="Gill J.E."/>
            <person name="Goldsmith A.D."/>
            <person name="Haas B."/>
            <person name="Hansen N.F."/>
            <person name="Hughes B."/>
            <person name="Huizar L."/>
            <person name="Hunter J.L."/>
            <person name="Jenkins J."/>
            <person name="Johnson-Hopson C."/>
            <person name="Khan S."/>
            <person name="Khaykin E."/>
            <person name="Kim C.J."/>
            <person name="Koo H.L."/>
            <person name="Kremenetskaia I."/>
            <person name="Kurtz D.B."/>
            <person name="Kwan A."/>
            <person name="Lam B."/>
            <person name="Langin-Hooper S."/>
            <person name="Lee A."/>
            <person name="Lee J.M."/>
            <person name="Lenz C.A."/>
            <person name="Li J.H."/>
            <person name="Li Y.-P."/>
            <person name="Lin X."/>
            <person name="Liu S.X."/>
            <person name="Liu Z.A."/>
            <person name="Luros J.S."/>
            <person name="Maiti R."/>
            <person name="Marziali A."/>
            <person name="Militscher J."/>
            <person name="Miranda M."/>
            <person name="Nguyen M."/>
            <person name="Nierman W.C."/>
            <person name="Osborne B.I."/>
            <person name="Pai G."/>
            <person name="Peterson J."/>
            <person name="Pham P.K."/>
            <person name="Rizzo M."/>
            <person name="Rooney T."/>
            <person name="Rowley D."/>
            <person name="Sakano H."/>
            <person name="Salzberg S.L."/>
            <person name="Schwartz J.R."/>
            <person name="Shinn P."/>
            <person name="Southwick A.M."/>
            <person name="Sun H."/>
            <person name="Tallon L.J."/>
            <person name="Tambunga G."/>
            <person name="Toriumi M.J."/>
            <person name="Town C.D."/>
            <person name="Utterback T."/>
            <person name="Van Aken S."/>
            <person name="Vaysberg M."/>
            <person name="Vysotskaia V.S."/>
            <person name="Walker M."/>
            <person name="Wu D."/>
            <person name="Yu G."/>
            <person name="Fraser C.M."/>
            <person name="Venter J.C."/>
            <person name="Davis R.W."/>
        </authorList>
    </citation>
    <scope>NUCLEOTIDE SEQUENCE [LARGE SCALE GENOMIC DNA]</scope>
    <source>
        <strain>cv. Columbia</strain>
    </source>
</reference>
<reference key="4">
    <citation type="journal article" date="2017" name="Plant J.">
        <title>Araport11: a complete reannotation of the Arabidopsis thaliana reference genome.</title>
        <authorList>
            <person name="Cheng C.Y."/>
            <person name="Krishnakumar V."/>
            <person name="Chan A.P."/>
            <person name="Thibaud-Nissen F."/>
            <person name="Schobel S."/>
            <person name="Town C.D."/>
        </authorList>
    </citation>
    <scope>GENOME REANNOTATION</scope>
    <source>
        <strain>cv. Columbia</strain>
    </source>
</reference>
<reference key="5">
    <citation type="journal article" date="2003" name="Science">
        <title>Empirical analysis of transcriptional activity in the Arabidopsis genome.</title>
        <authorList>
            <person name="Yamada K."/>
            <person name="Lim J."/>
            <person name="Dale J.M."/>
            <person name="Chen H."/>
            <person name="Shinn P."/>
            <person name="Palm C.J."/>
            <person name="Southwick A.M."/>
            <person name="Wu H.C."/>
            <person name="Kim C.J."/>
            <person name="Nguyen M."/>
            <person name="Pham P.K."/>
            <person name="Cheuk R.F."/>
            <person name="Karlin-Newmann G."/>
            <person name="Liu S.X."/>
            <person name="Lam B."/>
            <person name="Sakano H."/>
            <person name="Wu T."/>
            <person name="Yu G."/>
            <person name="Miranda M."/>
            <person name="Quach H.L."/>
            <person name="Tripp M."/>
            <person name="Chang C.H."/>
            <person name="Lee J.M."/>
            <person name="Toriumi M.J."/>
            <person name="Chan M.M."/>
            <person name="Tang C.C."/>
            <person name="Onodera C.S."/>
            <person name="Deng J.M."/>
            <person name="Akiyama K."/>
            <person name="Ansari Y."/>
            <person name="Arakawa T."/>
            <person name="Banh J."/>
            <person name="Banno F."/>
            <person name="Bowser L."/>
            <person name="Brooks S.Y."/>
            <person name="Carninci P."/>
            <person name="Chao Q."/>
            <person name="Choy N."/>
            <person name="Enju A."/>
            <person name="Goldsmith A.D."/>
            <person name="Gurjal M."/>
            <person name="Hansen N.F."/>
            <person name="Hayashizaki Y."/>
            <person name="Johnson-Hopson C."/>
            <person name="Hsuan V.W."/>
            <person name="Iida K."/>
            <person name="Karnes M."/>
            <person name="Khan S."/>
            <person name="Koesema E."/>
            <person name="Ishida J."/>
            <person name="Jiang P.X."/>
            <person name="Jones T."/>
            <person name="Kawai J."/>
            <person name="Kamiya A."/>
            <person name="Meyers C."/>
            <person name="Nakajima M."/>
            <person name="Narusaka M."/>
            <person name="Seki M."/>
            <person name="Sakurai T."/>
            <person name="Satou M."/>
            <person name="Tamse R."/>
            <person name="Vaysberg M."/>
            <person name="Wallender E.K."/>
            <person name="Wong C."/>
            <person name="Yamamura Y."/>
            <person name="Yuan S."/>
            <person name="Shinozaki K."/>
            <person name="Davis R.W."/>
            <person name="Theologis A."/>
            <person name="Ecker J.R."/>
        </authorList>
    </citation>
    <scope>NUCLEOTIDE SEQUENCE [LARGE SCALE MRNA]</scope>
    <source>
        <strain>cv. Columbia</strain>
    </source>
</reference>
<reference key="6">
    <citation type="submission" date="2006-07" db="EMBL/GenBank/DDBJ databases">
        <title>Large-scale analysis of RIKEN Arabidopsis full-length (RAFL) cDNAs.</title>
        <authorList>
            <person name="Totoki Y."/>
            <person name="Seki M."/>
            <person name="Ishida J."/>
            <person name="Nakajima M."/>
            <person name="Enju A."/>
            <person name="Kamiya A."/>
            <person name="Narusaka M."/>
            <person name="Shin-i T."/>
            <person name="Nakagawa M."/>
            <person name="Sakamoto N."/>
            <person name="Oishi K."/>
            <person name="Kohara Y."/>
            <person name="Kobayashi M."/>
            <person name="Toyoda A."/>
            <person name="Sakaki Y."/>
            <person name="Sakurai T."/>
            <person name="Iida K."/>
            <person name="Akiyama K."/>
            <person name="Satou M."/>
            <person name="Toyoda T."/>
            <person name="Konagaya A."/>
            <person name="Carninci P."/>
            <person name="Kawai J."/>
            <person name="Hayashizaki Y."/>
            <person name="Shinozaki K."/>
        </authorList>
    </citation>
    <scope>NUCLEOTIDE SEQUENCE [LARGE SCALE MRNA]</scope>
    <source>
        <strain>cv. Columbia</strain>
    </source>
</reference>
<reference key="7">
    <citation type="journal article" date="1998" name="J. Biol. Chem.">
        <title>Isoform-dependent differences in feedback regulation and subcellular localization of serine acetyltransferase involved in cysteine biosynthesis from Arabidopsis thaliana.</title>
        <authorList>
            <person name="Noji M."/>
            <person name="Inoue K."/>
            <person name="Kimura N."/>
            <person name="Gouda A."/>
            <person name="Saito K."/>
        </authorList>
    </citation>
    <scope>SUBCELLULAR LOCATION</scope>
    <scope>CATALYTIC ACTIVITY</scope>
    <scope>BIOPHYSICOCHEMICAL PROPERTIES</scope>
</reference>
<reference key="8">
    <citation type="journal article" date="2000" name="Proc. Natl. Acad. Sci. U.S.A.">
        <title>Glutathione biosynthesis in Arabidopsis trichome cells.</title>
        <authorList>
            <person name="Gutierrez-Alcala G."/>
            <person name="Gotor C."/>
            <person name="Meyer A.J."/>
            <person name="Fricker M."/>
            <person name="Vega J.M."/>
            <person name="Romero L.C."/>
        </authorList>
    </citation>
    <scope>TISSUE SPECIFICITY</scope>
    <scope>INDUCTION</scope>
</reference>
<reference key="9">
    <citation type="journal article" date="2003" name="Plant Mol. Biol.">
        <title>The serine acetyltransferase gene family in Arabidopsis thaliana and the regulation of its expression by cadmium.</title>
        <authorList>
            <person name="Howarth J.R."/>
            <person name="Dominguez-Solis J.R."/>
            <person name="Gutierrez-Alcala G."/>
            <person name="Wray J.L."/>
            <person name="Romero L.C."/>
            <person name="Gotor C."/>
        </authorList>
    </citation>
    <scope>TISSUE SPECIFICITY</scope>
    <scope>INDUCTION</scope>
    <source>
        <strain>cv. Columbia</strain>
    </source>
</reference>
<reference key="10">
    <citation type="journal article" date="2005" name="Plant Physiol.">
        <title>Characterization and expression analysis of a serine acetyltransferase gene family involved in a key step of the sulfur assimilation pathway in Arabidopsis.</title>
        <authorList>
            <person name="Kawashima C.G."/>
            <person name="Berkowitz O."/>
            <person name="Hell R."/>
            <person name="Noji M."/>
            <person name="Saito K."/>
        </authorList>
    </citation>
    <scope>TISSUE SPECIFICITY</scope>
    <scope>INDUCTION</scope>
    <scope>GENE FAMILY</scope>
    <scope>NOMENCLATURE</scope>
</reference>
<reference key="11">
    <citation type="journal article" date="2005" name="J. Biol. Chem.">
        <title>Molecular basis of cysteine biosynthesis in plants: structural and functional analysis of o-acetylserine sulfhydrylase from Arabidopsis thaliana.</title>
        <authorList>
            <person name="Bonner E.R."/>
            <person name="Cahoon R.E."/>
            <person name="Knapke S.M."/>
            <person name="Jez J.M."/>
        </authorList>
    </citation>
    <scope>INTERACTION WITH OASA1</scope>
</reference>
<reference key="12">
    <citation type="journal article" date="2008" name="Proc. Natl. Acad. Sci. U.S.A.">
        <title>A cyclophilin links redox and light signals to cysteine biosynthesis and stress responses in chloroplasts.</title>
        <authorList>
            <person name="Dominguez-Solis J.R."/>
            <person name="He Z."/>
            <person name="Lima A."/>
            <person name="Ting J."/>
            <person name="Buchanan B.B."/>
            <person name="Luan S."/>
        </authorList>
    </citation>
    <scope>INTERACTION WITH CYP20-3</scope>
</reference>
<reference key="13">
    <citation type="journal article" date="2006" name="Plant Cell">
        <title>Structural basis for interaction of O-acetylserine sulfhydrylase and serine acetyltransferase in the Arabidopsis cysteine synthase complex.</title>
        <authorList>
            <person name="Francois J.A."/>
            <person name="Kumaran S."/>
            <person name="Jez J.M."/>
        </authorList>
    </citation>
    <scope>X-RAY CRYSTALLOGRAPHY (2.8 ANGSTROMS) OF 307-314</scope>
    <scope>INTERACTION WITH OASA1</scope>
</reference>
<dbReference type="EC" id="2.3.1.30" evidence="15 16"/>
<dbReference type="EMBL" id="L42212">
    <property type="protein sequence ID" value="AAC37474.1"/>
    <property type="molecule type" value="mRNA"/>
</dbReference>
<dbReference type="EMBL" id="L34076">
    <property type="protein sequence ID" value="AAA58608.1"/>
    <property type="molecule type" value="Genomic_RNA"/>
</dbReference>
<dbReference type="EMBL" id="Z34888">
    <property type="protein sequence ID" value="CAA84371.1"/>
    <property type="molecule type" value="Genomic_DNA"/>
</dbReference>
<dbReference type="EMBL" id="AC002304">
    <property type="protein sequence ID" value="AAF79319.1"/>
    <property type="molecule type" value="Genomic_DNA"/>
</dbReference>
<dbReference type="EMBL" id="CP002684">
    <property type="protein sequence ID" value="AEE33320.1"/>
    <property type="molecule type" value="Genomic_DNA"/>
</dbReference>
<dbReference type="EMBL" id="BT008309">
    <property type="protein sequence ID" value="AAP37668.1"/>
    <property type="molecule type" value="mRNA"/>
</dbReference>
<dbReference type="EMBL" id="AK227691">
    <property type="protein sequence ID" value="BAE99678.1"/>
    <property type="molecule type" value="mRNA"/>
</dbReference>
<dbReference type="PIR" id="S67482">
    <property type="entry name" value="S67482"/>
</dbReference>
<dbReference type="PIR" id="S71181">
    <property type="entry name" value="S71181"/>
</dbReference>
<dbReference type="RefSeq" id="NP_175988.1">
    <property type="nucleotide sequence ID" value="NM_104470.3"/>
</dbReference>
<dbReference type="PDB" id="2ISQ">
    <property type="method" value="X-ray"/>
    <property type="resolution" value="2.80 A"/>
    <property type="chains" value="B=307-314"/>
</dbReference>
<dbReference type="PDBsum" id="2ISQ"/>
<dbReference type="SMR" id="Q42588"/>
<dbReference type="BioGRID" id="27268">
    <property type="interactions" value="2"/>
</dbReference>
<dbReference type="DIP" id="DIP-40647N"/>
<dbReference type="FunCoup" id="Q42588">
    <property type="interactions" value="480"/>
</dbReference>
<dbReference type="IntAct" id="Q42588">
    <property type="interactions" value="2"/>
</dbReference>
<dbReference type="STRING" id="3702.Q42588"/>
<dbReference type="PaxDb" id="3702-AT1G55920.1"/>
<dbReference type="ProteomicsDB" id="232759"/>
<dbReference type="EnsemblPlants" id="AT1G55920.1">
    <property type="protein sequence ID" value="AT1G55920.1"/>
    <property type="gene ID" value="AT1G55920"/>
</dbReference>
<dbReference type="GeneID" id="842043"/>
<dbReference type="Gramene" id="AT1G55920.1">
    <property type="protein sequence ID" value="AT1G55920.1"/>
    <property type="gene ID" value="AT1G55920"/>
</dbReference>
<dbReference type="KEGG" id="ath:AT1G55920"/>
<dbReference type="Araport" id="AT1G55920"/>
<dbReference type="TAIR" id="AT1G55920">
    <property type="gene designation" value="SERAT2"/>
</dbReference>
<dbReference type="eggNOG" id="KOG4750">
    <property type="taxonomic scope" value="Eukaryota"/>
</dbReference>
<dbReference type="HOGENOM" id="CLU_051638_0_1_1"/>
<dbReference type="InParanoid" id="Q42588"/>
<dbReference type="OMA" id="YASITSH"/>
<dbReference type="PhylomeDB" id="Q42588"/>
<dbReference type="BioCyc" id="ARA:AT1G55920-MONOMER"/>
<dbReference type="BioCyc" id="MetaCyc:AT1G55920-MONOMER"/>
<dbReference type="BRENDA" id="2.3.1.30">
    <property type="organism ID" value="399"/>
</dbReference>
<dbReference type="SABIO-RK" id="Q42588"/>
<dbReference type="UniPathway" id="UPA00136">
    <property type="reaction ID" value="UER00199"/>
</dbReference>
<dbReference type="EvolutionaryTrace" id="Q42588"/>
<dbReference type="PRO" id="PR:Q42588"/>
<dbReference type="Proteomes" id="UP000006548">
    <property type="component" value="Chromosome 1"/>
</dbReference>
<dbReference type="ExpressionAtlas" id="Q42588">
    <property type="expression patterns" value="baseline and differential"/>
</dbReference>
<dbReference type="GO" id="GO:0009507">
    <property type="term" value="C:chloroplast"/>
    <property type="evidence" value="ECO:0000314"/>
    <property type="project" value="TAIR"/>
</dbReference>
<dbReference type="GO" id="GO:0005829">
    <property type="term" value="C:cytosol"/>
    <property type="evidence" value="ECO:0000304"/>
    <property type="project" value="TAIR"/>
</dbReference>
<dbReference type="GO" id="GO:0005634">
    <property type="term" value="C:nucleus"/>
    <property type="evidence" value="ECO:0007005"/>
    <property type="project" value="TAIR"/>
</dbReference>
<dbReference type="GO" id="GO:0009001">
    <property type="term" value="F:serine O-acetyltransferase activity"/>
    <property type="evidence" value="ECO:0000314"/>
    <property type="project" value="TAIR"/>
</dbReference>
<dbReference type="GO" id="GO:0009970">
    <property type="term" value="P:cellular response to sulfate starvation"/>
    <property type="evidence" value="ECO:0000270"/>
    <property type="project" value="TAIR"/>
</dbReference>
<dbReference type="GO" id="GO:0006535">
    <property type="term" value="P:cysteine biosynthetic process from serine"/>
    <property type="evidence" value="ECO:0007669"/>
    <property type="project" value="InterPro"/>
</dbReference>
<dbReference type="CDD" id="cd03354">
    <property type="entry name" value="LbH_SAT"/>
    <property type="match status" value="1"/>
</dbReference>
<dbReference type="FunFam" id="2.160.10.10:FF:000002">
    <property type="entry name" value="Serine acetyltransferase"/>
    <property type="match status" value="1"/>
</dbReference>
<dbReference type="FunFam" id="1.10.3130.10:FF:000007">
    <property type="entry name" value="serine acetyltransferase 1, chloroplastic"/>
    <property type="match status" value="1"/>
</dbReference>
<dbReference type="Gene3D" id="2.160.10.10">
    <property type="entry name" value="Hexapeptide repeat proteins"/>
    <property type="match status" value="1"/>
</dbReference>
<dbReference type="Gene3D" id="1.10.3130.10">
    <property type="entry name" value="serine acetyltransferase, domain 1"/>
    <property type="match status" value="1"/>
</dbReference>
<dbReference type="InterPro" id="IPR001451">
    <property type="entry name" value="Hexapep"/>
</dbReference>
<dbReference type="InterPro" id="IPR018357">
    <property type="entry name" value="Hexapep_transf_CS"/>
</dbReference>
<dbReference type="InterPro" id="IPR045304">
    <property type="entry name" value="LbH_SAT"/>
</dbReference>
<dbReference type="InterPro" id="IPR010493">
    <property type="entry name" value="Ser_AcTrfase_N"/>
</dbReference>
<dbReference type="InterPro" id="IPR042122">
    <property type="entry name" value="Ser_AcTrfase_N_sf"/>
</dbReference>
<dbReference type="InterPro" id="IPR005881">
    <property type="entry name" value="Ser_O-AcTrfase"/>
</dbReference>
<dbReference type="InterPro" id="IPR053376">
    <property type="entry name" value="Serine_acetyltransferase"/>
</dbReference>
<dbReference type="InterPro" id="IPR011004">
    <property type="entry name" value="Trimer_LpxA-like_sf"/>
</dbReference>
<dbReference type="NCBIfam" id="TIGR01172">
    <property type="entry name" value="cysE"/>
    <property type="match status" value="1"/>
</dbReference>
<dbReference type="NCBIfam" id="NF041874">
    <property type="entry name" value="EPS_EpsC"/>
    <property type="match status" value="1"/>
</dbReference>
<dbReference type="PANTHER" id="PTHR42811">
    <property type="entry name" value="SERINE ACETYLTRANSFERASE"/>
    <property type="match status" value="1"/>
</dbReference>
<dbReference type="Pfam" id="PF00132">
    <property type="entry name" value="Hexapep"/>
    <property type="match status" value="1"/>
</dbReference>
<dbReference type="Pfam" id="PF06426">
    <property type="entry name" value="SATase_N"/>
    <property type="match status" value="1"/>
</dbReference>
<dbReference type="SMART" id="SM00971">
    <property type="entry name" value="SATase_N"/>
    <property type="match status" value="1"/>
</dbReference>
<dbReference type="SUPFAM" id="SSF51161">
    <property type="entry name" value="Trimeric LpxA-like enzymes"/>
    <property type="match status" value="1"/>
</dbReference>
<dbReference type="PROSITE" id="PS00101">
    <property type="entry name" value="HEXAPEP_TRANSFERASES"/>
    <property type="match status" value="1"/>
</dbReference>
<comment type="function">
    <text evidence="8 10">Serine acetyltransferase which catalyzes the formation of O-acetyl-L-serine from acetyl-CoA and L-serine (PubMed:7851429, PubMed:9830017). Also displays O-acetylserine (thio1)-lyase activity in vitro (PubMed:7851429). May be involved in detoxification process by mediating the production of glutathione.</text>
</comment>
<comment type="catalytic activity">
    <reaction evidence="15 16">
        <text>L-serine + acetyl-CoA = O-acetyl-L-serine + CoA</text>
        <dbReference type="Rhea" id="RHEA:24560"/>
        <dbReference type="ChEBI" id="CHEBI:33384"/>
        <dbReference type="ChEBI" id="CHEBI:57287"/>
        <dbReference type="ChEBI" id="CHEBI:57288"/>
        <dbReference type="ChEBI" id="CHEBI:58340"/>
        <dbReference type="EC" id="2.3.1.30"/>
    </reaction>
    <physiologicalReaction direction="left-to-right" evidence="15 16">
        <dbReference type="Rhea" id="RHEA:24561"/>
    </physiologicalReaction>
</comment>
<comment type="biophysicochemical properties">
    <kinetics>
        <KM evidence="10">1.64 mM for L-Ser (at pH 8 and 37 degrees Celsius)</KM>
        <KM evidence="10">0.16 mM for acetyl-CoA (at pH 8 and 37 degrees Celsius)</KM>
    </kinetics>
</comment>
<comment type="pathway">
    <text>Amino-acid biosynthesis; L-cysteine biosynthesis; L-cysteine from L-serine: step 1/2.</text>
</comment>
<comment type="subunit">
    <text evidence="1 5 6 7">Homomultimer (By similarity). Interacts with OASA1 and CYP20-3. Component of the cysteine synthase complex (CSC) composed of two OAS-TL dimers and one SAT hexamer.</text>
</comment>
<comment type="interaction">
    <interactant intactId="EBI-1633480">
        <id>Q42588</id>
    </interactant>
    <interactant intactId="EBI-449385">
        <id>P34791</id>
        <label>CYP20-3</label>
    </interactant>
    <organismsDiffer>false</organismsDiffer>
    <experiments>3</experiments>
</comment>
<comment type="subcellular location">
    <subcellularLocation>
        <location evidence="10">Plastid</location>
        <location evidence="10">Chloroplast</location>
    </subcellularLocation>
    <subcellularLocation>
        <location evidence="10">Cytoplasm</location>
    </subcellularLocation>
    <text>First chloroplastic and progressively cytoplasmic during aging.</text>
</comment>
<comment type="tissue specificity">
    <text evidence="2 3 4 9">Mostly expressed in leaves. Localized in cortex, trichomes and vascular tissues, particularly in phloem.</text>
</comment>
<comment type="induction">
    <text evidence="2 3 4">By cadmium (Cd). Not induced under sulfur-deficient conditions. Repressed in trichomes in response to NaCl treatment.</text>
</comment>
<comment type="similarity">
    <text evidence="14">Belongs to the transferase hexapeptide repeat family.</text>
</comment>
<name>SAT1_ARATH</name>
<accession>Q42588</accession>
<accession>Q0WT70</accession>
<accession>Q43297</accession>
<proteinExistence type="evidence at protein level"/>
<organism>
    <name type="scientific">Arabidopsis thaliana</name>
    <name type="common">Mouse-ear cress</name>
    <dbReference type="NCBI Taxonomy" id="3702"/>
    <lineage>
        <taxon>Eukaryota</taxon>
        <taxon>Viridiplantae</taxon>
        <taxon>Streptophyta</taxon>
        <taxon>Embryophyta</taxon>
        <taxon>Tracheophyta</taxon>
        <taxon>Spermatophyta</taxon>
        <taxon>Magnoliopsida</taxon>
        <taxon>eudicotyledons</taxon>
        <taxon>Gunneridae</taxon>
        <taxon>Pentapetalae</taxon>
        <taxon>rosids</taxon>
        <taxon>malvids</taxon>
        <taxon>Brassicales</taxon>
        <taxon>Brassicaceae</taxon>
        <taxon>Camelineae</taxon>
        <taxon>Arabidopsis</taxon>
    </lineage>
</organism>
<sequence>MATCIDTCRTGNTQDDDSRFCCIKNFFRPGFSVNRKIHHTQIEDDDDVWIKMLEEAKSDVKQEPILSNYYYASITSHRSLESALAHILSVKLSNLNLPSNTLFELFISVLEESPEIIESTKQDLIAVKERDPACISYVHCFLGFKGFLACQAHRIAHTLWKQNRKIVALLIQNRVSESFAVDIHPGAKIGKGILLDHATGVVIGETAVVGDNVSILHGVTLGGTGKQSGDRHPKIGDGVLIGAGSCILGNITIGEGAKIGSGSVVVKDVPARTTAVGNPARLIGGKENPRKHDKIPCLTMDQTSYLTEWSDYVI</sequence>
<feature type="chain" id="PRO_0000068690" description="Serine acetyltransferase 1, chloroplastic">
    <location>
        <begin position="1"/>
        <end position="314"/>
    </location>
</feature>
<feature type="sequence conflict" description="In Ref. 1; AAC37474." evidence="14" ref="1">
    <original>D</original>
    <variation>H</variation>
    <location>
        <position position="6"/>
    </location>
</feature>
<feature type="sequence conflict" description="In Ref. 1; AAC37474." evidence="14" ref="1">
    <original>KN</original>
    <variation>NK</variation>
    <location>
        <begin position="24"/>
        <end position="25"/>
    </location>
</feature>
<feature type="sequence conflict" description="In Ref. 1; AAC37474." evidence="14" ref="1">
    <original>E</original>
    <variation>K</variation>
    <location>
        <position position="54"/>
    </location>
</feature>
<feature type="sequence conflict" description="In Ref. 1; AAC37474." evidence="14" ref="1">
    <original>K</original>
    <variation>E</variation>
    <location>
        <position position="57"/>
    </location>
</feature>
<feature type="sequence conflict" description="In Ref. 1; AAC37474." evidence="14" ref="1">
    <original>A</original>
    <variation>G</variation>
    <location>
        <position position="85"/>
    </location>
</feature>
<keyword id="KW-0002">3D-structure</keyword>
<keyword id="KW-0012">Acyltransferase</keyword>
<keyword id="KW-0028">Amino-acid biosynthesis</keyword>
<keyword id="KW-0150">Chloroplast</keyword>
<keyword id="KW-0963">Cytoplasm</keyword>
<keyword id="KW-0934">Plastid</keyword>
<keyword id="KW-1185">Reference proteome</keyword>
<keyword id="KW-0808">Transferase</keyword>
<protein>
    <recommendedName>
        <fullName>Serine acetyltransferase 1, chloroplastic</fullName>
        <shortName>AtSAT-1</shortName>
        <ecNumber evidence="15 16">2.3.1.30</ecNumber>
    </recommendedName>
    <alternativeName>
        <fullName evidence="11">AtSERAT2;1</fullName>
    </alternativeName>
    <alternativeName>
        <fullName evidence="13">SAT-p</fullName>
    </alternativeName>
</protein>